<reference key="1">
    <citation type="journal article" date="1999" name="Genetics">
        <title>Divergence of the hyperthermophilic archaea Pyrococcus furiosus and P. horikoshii inferred from complete genomic sequences.</title>
        <authorList>
            <person name="Maeder D.L."/>
            <person name="Weiss R.B."/>
            <person name="Dunn D.M."/>
            <person name="Cherry J.L."/>
            <person name="Gonzalez J.M."/>
            <person name="DiRuggiero J."/>
            <person name="Robb F.T."/>
        </authorList>
    </citation>
    <scope>NUCLEOTIDE SEQUENCE [LARGE SCALE GENOMIC DNA]</scope>
    <source>
        <strain>ATCC 43587 / DSM 3638 / JCM 8422 / Vc1</strain>
    </source>
</reference>
<feature type="chain" id="PRO_0000337823" description="Probable phosphoglucosamine mutase">
    <location>
        <begin position="1"/>
        <end position="452"/>
    </location>
</feature>
<feature type="active site" description="Phosphoserine intermediate" evidence="1">
    <location>
        <position position="96"/>
    </location>
</feature>
<feature type="binding site" description="via phosphate group" evidence="1">
    <location>
        <position position="96"/>
    </location>
    <ligand>
        <name>Mg(2+)</name>
        <dbReference type="ChEBI" id="CHEBI:18420"/>
    </ligand>
</feature>
<feature type="binding site" evidence="1">
    <location>
        <position position="233"/>
    </location>
    <ligand>
        <name>Mg(2+)</name>
        <dbReference type="ChEBI" id="CHEBI:18420"/>
    </ligand>
</feature>
<feature type="binding site" evidence="1">
    <location>
        <position position="235"/>
    </location>
    <ligand>
        <name>Mg(2+)</name>
        <dbReference type="ChEBI" id="CHEBI:18420"/>
    </ligand>
</feature>
<feature type="binding site" evidence="1">
    <location>
        <position position="237"/>
    </location>
    <ligand>
        <name>Mg(2+)</name>
        <dbReference type="ChEBI" id="CHEBI:18420"/>
    </ligand>
</feature>
<feature type="modified residue" description="Phosphoserine" evidence="1">
    <location>
        <position position="96"/>
    </location>
</feature>
<organism>
    <name type="scientific">Pyrococcus furiosus (strain ATCC 43587 / DSM 3638 / JCM 8422 / Vc1)</name>
    <dbReference type="NCBI Taxonomy" id="186497"/>
    <lineage>
        <taxon>Archaea</taxon>
        <taxon>Methanobacteriati</taxon>
        <taxon>Methanobacteriota</taxon>
        <taxon>Thermococci</taxon>
        <taxon>Thermococcales</taxon>
        <taxon>Thermococcaceae</taxon>
        <taxon>Pyrococcus</taxon>
    </lineage>
</organism>
<keyword id="KW-0413">Isomerase</keyword>
<keyword id="KW-0460">Magnesium</keyword>
<keyword id="KW-0479">Metal-binding</keyword>
<keyword id="KW-0597">Phosphoprotein</keyword>
<keyword id="KW-1185">Reference proteome</keyword>
<accession>Q8U2H4</accession>
<evidence type="ECO:0000255" key="1">
    <source>
        <dbReference type="HAMAP-Rule" id="MF_01554"/>
    </source>
</evidence>
<sequence length="452" mass="49819">MGKYFGTSGIREVVNEKLTPELALKVGLALGTYLGEGRVVVGIDTRTSSEMIKHALVSGLLATGIEVVDIGLAPTPLTGFAIKLYNADAGVTITASHNPPNYNGIKVWDRNGMAYTPDKESELERIIEEETFKRVSWMEIGEVIKADPKKEYIKNAVEQINLENSYTVVVDSGNGAGSIVSPYLQRELGNKVISLNSHPTGFFVRELEPNRKSLDMLSKVVREVGADVGIAHDGDADRIGVVDDQGNFVDYEVMLSLIAGYMIEKYGKGKVVTTVDAGFALDDYLKPRGGEVIRTKVGDVAVAYELSKHGGVFGGEPSGTWIIPQWNLTPDGIFAGALVVEMIDKLGPISELAKEVPRYVTLREKIPCPNELKQKVMRIIEKLALQNFEYKNLIDIDGIRIENEEWWILFRPSGTEPIMRITLEAHTKEKAEELMKKARGLVKEAIEKAKLS</sequence>
<comment type="function">
    <text evidence="1">Catalyzes the conversion of glucosamine-6-phosphate to glucosamine-1-phosphate.</text>
</comment>
<comment type="catalytic activity">
    <reaction evidence="1">
        <text>alpha-D-glucosamine 1-phosphate = D-glucosamine 6-phosphate</text>
        <dbReference type="Rhea" id="RHEA:23424"/>
        <dbReference type="ChEBI" id="CHEBI:58516"/>
        <dbReference type="ChEBI" id="CHEBI:58725"/>
        <dbReference type="EC" id="5.4.2.10"/>
    </reaction>
</comment>
<comment type="cofactor">
    <cofactor evidence="1">
        <name>Mg(2+)</name>
        <dbReference type="ChEBI" id="CHEBI:18420"/>
    </cofactor>
    <text evidence="1">Binds 1 Mg(2+) ion per subunit.</text>
</comment>
<comment type="PTM">
    <text evidence="1">Activated by phosphorylation.</text>
</comment>
<comment type="similarity">
    <text evidence="1">Belongs to the phosphohexose mutase family.</text>
</comment>
<dbReference type="EC" id="5.4.2.10" evidence="1"/>
<dbReference type="EMBL" id="AE009950">
    <property type="protein sequence ID" value="AAL80985.1"/>
    <property type="molecule type" value="Genomic_DNA"/>
</dbReference>
<dbReference type="RefSeq" id="WP_011011993.1">
    <property type="nucleotide sequence ID" value="NZ_CP023154.1"/>
</dbReference>
<dbReference type="SMR" id="Q8U2H4"/>
<dbReference type="STRING" id="186497.PF0861"/>
<dbReference type="PaxDb" id="186497-PF0861"/>
<dbReference type="GeneID" id="41712669"/>
<dbReference type="KEGG" id="pfu:PF0861"/>
<dbReference type="PATRIC" id="fig|186497.12.peg.911"/>
<dbReference type="eggNOG" id="arCOG00767">
    <property type="taxonomic scope" value="Archaea"/>
</dbReference>
<dbReference type="HOGENOM" id="CLU_016950_7_1_2"/>
<dbReference type="OrthoDB" id="10363at2157"/>
<dbReference type="PhylomeDB" id="Q8U2H4"/>
<dbReference type="Proteomes" id="UP000001013">
    <property type="component" value="Chromosome"/>
</dbReference>
<dbReference type="GO" id="GO:0000287">
    <property type="term" value="F:magnesium ion binding"/>
    <property type="evidence" value="ECO:0007669"/>
    <property type="project" value="UniProtKB-UniRule"/>
</dbReference>
<dbReference type="GO" id="GO:0008966">
    <property type="term" value="F:phosphoglucosamine mutase activity"/>
    <property type="evidence" value="ECO:0007669"/>
    <property type="project" value="UniProtKB-UniRule"/>
</dbReference>
<dbReference type="GO" id="GO:0005975">
    <property type="term" value="P:carbohydrate metabolic process"/>
    <property type="evidence" value="ECO:0007669"/>
    <property type="project" value="InterPro"/>
</dbReference>
<dbReference type="CDD" id="cd03087">
    <property type="entry name" value="PGM_like1"/>
    <property type="match status" value="1"/>
</dbReference>
<dbReference type="FunFam" id="3.40.120.10:FF:000001">
    <property type="entry name" value="Phosphoglucosamine mutase"/>
    <property type="match status" value="1"/>
</dbReference>
<dbReference type="FunFam" id="3.30.310.50:FF:000009">
    <property type="entry name" value="Probable phosphoglucosamine mutase"/>
    <property type="match status" value="1"/>
</dbReference>
<dbReference type="Gene3D" id="3.40.120.10">
    <property type="entry name" value="Alpha-D-Glucose-1,6-Bisphosphate, subunit A, domain 3"/>
    <property type="match status" value="3"/>
</dbReference>
<dbReference type="Gene3D" id="3.30.310.50">
    <property type="entry name" value="Alpha-D-phosphohexomutase, C-terminal domain"/>
    <property type="match status" value="1"/>
</dbReference>
<dbReference type="HAMAP" id="MF_01554_A">
    <property type="entry name" value="GlmM_A"/>
    <property type="match status" value="1"/>
</dbReference>
<dbReference type="InterPro" id="IPR005844">
    <property type="entry name" value="A-D-PHexomutase_a/b/a-I"/>
</dbReference>
<dbReference type="InterPro" id="IPR016055">
    <property type="entry name" value="A-D-PHexomutase_a/b/a-I/II/III"/>
</dbReference>
<dbReference type="InterPro" id="IPR005845">
    <property type="entry name" value="A-D-PHexomutase_a/b/a-II"/>
</dbReference>
<dbReference type="InterPro" id="IPR005846">
    <property type="entry name" value="A-D-PHexomutase_a/b/a-III"/>
</dbReference>
<dbReference type="InterPro" id="IPR005843">
    <property type="entry name" value="A-D-PHexomutase_C"/>
</dbReference>
<dbReference type="InterPro" id="IPR036900">
    <property type="entry name" value="A-D-PHexomutase_C_sf"/>
</dbReference>
<dbReference type="InterPro" id="IPR016066">
    <property type="entry name" value="A-D-PHexomutase_CS"/>
</dbReference>
<dbReference type="InterPro" id="IPR005841">
    <property type="entry name" value="Alpha-D-phosphohexomutase_SF"/>
</dbReference>
<dbReference type="InterPro" id="IPR023666">
    <property type="entry name" value="GlmM_arc"/>
</dbReference>
<dbReference type="InterPro" id="IPR024086">
    <property type="entry name" value="GlmM_arc-type"/>
</dbReference>
<dbReference type="NCBIfam" id="TIGR03990">
    <property type="entry name" value="Arch_GlmM"/>
    <property type="match status" value="1"/>
</dbReference>
<dbReference type="PANTHER" id="PTHR43771">
    <property type="entry name" value="PHOSPHOMANNOMUTASE"/>
    <property type="match status" value="1"/>
</dbReference>
<dbReference type="PANTHER" id="PTHR43771:SF1">
    <property type="entry name" value="PHOSPHOMANNOMUTASE"/>
    <property type="match status" value="1"/>
</dbReference>
<dbReference type="Pfam" id="PF02878">
    <property type="entry name" value="PGM_PMM_I"/>
    <property type="match status" value="1"/>
</dbReference>
<dbReference type="Pfam" id="PF02879">
    <property type="entry name" value="PGM_PMM_II"/>
    <property type="match status" value="1"/>
</dbReference>
<dbReference type="Pfam" id="PF02880">
    <property type="entry name" value="PGM_PMM_III"/>
    <property type="match status" value="1"/>
</dbReference>
<dbReference type="Pfam" id="PF00408">
    <property type="entry name" value="PGM_PMM_IV"/>
    <property type="match status" value="1"/>
</dbReference>
<dbReference type="PRINTS" id="PR00509">
    <property type="entry name" value="PGMPMM"/>
</dbReference>
<dbReference type="SUPFAM" id="SSF55957">
    <property type="entry name" value="Phosphoglucomutase, C-terminal domain"/>
    <property type="match status" value="1"/>
</dbReference>
<dbReference type="SUPFAM" id="SSF53738">
    <property type="entry name" value="Phosphoglucomutase, first 3 domains"/>
    <property type="match status" value="3"/>
</dbReference>
<dbReference type="PROSITE" id="PS00710">
    <property type="entry name" value="PGM_PMM"/>
    <property type="match status" value="1"/>
</dbReference>
<gene>
    <name evidence="1" type="primary">glmM</name>
    <name type="ordered locus">PF0861</name>
</gene>
<protein>
    <recommendedName>
        <fullName evidence="1">Probable phosphoglucosamine mutase</fullName>
        <ecNumber evidence="1">5.4.2.10</ecNumber>
    </recommendedName>
</protein>
<proteinExistence type="inferred from homology"/>
<name>GLMM_PYRFU</name>